<dbReference type="EC" id="4.3.1.25"/>
<dbReference type="EMBL" id="L77912">
    <property type="protein sequence ID" value="AAL40137.1"/>
    <property type="molecule type" value="mRNA"/>
</dbReference>
<dbReference type="SMR" id="Q8VXG7"/>
<dbReference type="STRING" id="4577.Q8VXG7"/>
<dbReference type="PaxDb" id="4577-GRMZM2G074604_P01"/>
<dbReference type="eggNOG" id="KOG0222">
    <property type="taxonomic scope" value="Eukaryota"/>
</dbReference>
<dbReference type="InParanoid" id="Q8VXG7"/>
<dbReference type="BRENDA" id="4.3.1.24">
    <property type="organism ID" value="6752"/>
</dbReference>
<dbReference type="SABIO-RK" id="Q8VXG7"/>
<dbReference type="UniPathway" id="UPA00713">
    <property type="reaction ID" value="UER00725"/>
</dbReference>
<dbReference type="Proteomes" id="UP000007305">
    <property type="component" value="Unplaced"/>
</dbReference>
<dbReference type="ExpressionAtlas" id="Q8VXG7">
    <property type="expression patterns" value="baseline and differential"/>
</dbReference>
<dbReference type="GO" id="GO:0005737">
    <property type="term" value="C:cytoplasm"/>
    <property type="evidence" value="ECO:0007669"/>
    <property type="project" value="UniProtKB-SubCell"/>
</dbReference>
<dbReference type="GO" id="GO:0016841">
    <property type="term" value="F:ammonia-lyase activity"/>
    <property type="evidence" value="ECO:0000318"/>
    <property type="project" value="GO_Central"/>
</dbReference>
<dbReference type="GO" id="GO:0045548">
    <property type="term" value="F:phenylalanine ammonia-lyase activity"/>
    <property type="evidence" value="ECO:0000314"/>
    <property type="project" value="AgBase"/>
</dbReference>
<dbReference type="GO" id="GO:0052883">
    <property type="term" value="F:tyrosine ammonia-lyase activity"/>
    <property type="evidence" value="ECO:0007669"/>
    <property type="project" value="RHEA"/>
</dbReference>
<dbReference type="GO" id="GO:0009800">
    <property type="term" value="P:cinnamic acid biosynthetic process"/>
    <property type="evidence" value="ECO:0007669"/>
    <property type="project" value="UniProtKB-UniPathway"/>
</dbReference>
<dbReference type="GO" id="GO:0006559">
    <property type="term" value="P:L-phenylalanine catabolic process"/>
    <property type="evidence" value="ECO:0007669"/>
    <property type="project" value="InterPro"/>
</dbReference>
<dbReference type="GO" id="GO:0009699">
    <property type="term" value="P:phenylpropanoid biosynthetic process"/>
    <property type="evidence" value="ECO:0000304"/>
    <property type="project" value="AgBase"/>
</dbReference>
<dbReference type="GO" id="GO:0016598">
    <property type="term" value="P:protein arginylation"/>
    <property type="evidence" value="ECO:0000314"/>
    <property type="project" value="AgBase"/>
</dbReference>
<dbReference type="GO" id="GO:0046898">
    <property type="term" value="P:response to cycloheximide"/>
    <property type="evidence" value="ECO:0000314"/>
    <property type="project" value="AgBase"/>
</dbReference>
<dbReference type="GO" id="GO:0009739">
    <property type="term" value="P:response to gibberellin"/>
    <property type="evidence" value="ECO:0000314"/>
    <property type="project" value="AgBase"/>
</dbReference>
<dbReference type="CDD" id="cd00332">
    <property type="entry name" value="PAL-HAL"/>
    <property type="match status" value="1"/>
</dbReference>
<dbReference type="FunFam" id="1.10.275.10:FF:000009">
    <property type="entry name" value="Phenylalanine ammonia-lyase"/>
    <property type="match status" value="1"/>
</dbReference>
<dbReference type="FunFam" id="1.20.200.10:FF:000009">
    <property type="entry name" value="Phenylalanine ammonia-lyase"/>
    <property type="match status" value="1"/>
</dbReference>
<dbReference type="Gene3D" id="1.20.200.10">
    <property type="entry name" value="Fumarase/aspartase (Central domain)"/>
    <property type="match status" value="1"/>
</dbReference>
<dbReference type="Gene3D" id="1.10.275.10">
    <property type="entry name" value="Fumarase/aspartase (N-terminal domain)"/>
    <property type="match status" value="1"/>
</dbReference>
<dbReference type="Gene3D" id="1.10.274.20">
    <property type="entry name" value="Phenylalanine ammonia-lyase 1, domain 3"/>
    <property type="match status" value="1"/>
</dbReference>
<dbReference type="InterPro" id="IPR001106">
    <property type="entry name" value="Aromatic_Lyase"/>
</dbReference>
<dbReference type="InterPro" id="IPR024083">
    <property type="entry name" value="Fumarase/histidase_N"/>
</dbReference>
<dbReference type="InterPro" id="IPR008948">
    <property type="entry name" value="L-Aspartase-like"/>
</dbReference>
<dbReference type="InterPro" id="IPR022313">
    <property type="entry name" value="Phe/His_NH3-lyase_AS"/>
</dbReference>
<dbReference type="InterPro" id="IPR005922">
    <property type="entry name" value="Phe_NH3-lyase"/>
</dbReference>
<dbReference type="InterPro" id="IPR023144">
    <property type="entry name" value="Phe_NH3-lyase_shielding_dom_sf"/>
</dbReference>
<dbReference type="NCBIfam" id="TIGR01226">
    <property type="entry name" value="phe_am_lyase"/>
    <property type="match status" value="1"/>
</dbReference>
<dbReference type="PANTHER" id="PTHR10362">
    <property type="entry name" value="HISTIDINE AMMONIA-LYASE"/>
    <property type="match status" value="1"/>
</dbReference>
<dbReference type="Pfam" id="PF00221">
    <property type="entry name" value="Lyase_aromatic"/>
    <property type="match status" value="1"/>
</dbReference>
<dbReference type="SUPFAM" id="SSF48557">
    <property type="entry name" value="L-aspartase-like"/>
    <property type="match status" value="1"/>
</dbReference>
<dbReference type="PROSITE" id="PS00488">
    <property type="entry name" value="PAL_HISTIDASE"/>
    <property type="match status" value="1"/>
</dbReference>
<protein>
    <recommendedName>
        <fullName>Phenylalanine/tyrosine ammonia-lyase</fullName>
        <ecNumber>4.3.1.25</ecNumber>
    </recommendedName>
    <alternativeName>
        <fullName>Bifunctional phenylalanine ammonia-lyase</fullName>
        <shortName>Bifunctional PAL</shortName>
    </alternativeName>
</protein>
<name>PALY_MAIZE</name>
<organism>
    <name type="scientific">Zea mays</name>
    <name type="common">Maize</name>
    <dbReference type="NCBI Taxonomy" id="4577"/>
    <lineage>
        <taxon>Eukaryota</taxon>
        <taxon>Viridiplantae</taxon>
        <taxon>Streptophyta</taxon>
        <taxon>Embryophyta</taxon>
        <taxon>Tracheophyta</taxon>
        <taxon>Spermatophyta</taxon>
        <taxon>Magnoliopsida</taxon>
        <taxon>Liliopsida</taxon>
        <taxon>Poales</taxon>
        <taxon>Poaceae</taxon>
        <taxon>PACMAD clade</taxon>
        <taxon>Panicoideae</taxon>
        <taxon>Andropogonodae</taxon>
        <taxon>Andropogoneae</taxon>
        <taxon>Tripsacinae</taxon>
        <taxon>Zea</taxon>
    </lineage>
</organism>
<evidence type="ECO:0000250" key="1"/>
<evidence type="ECO:0000250" key="2">
    <source>
        <dbReference type="UniProtKB" id="P11544"/>
    </source>
</evidence>
<evidence type="ECO:0000250" key="3">
    <source>
        <dbReference type="UniProtKB" id="Q68G84"/>
    </source>
</evidence>
<evidence type="ECO:0000255" key="4">
    <source>
        <dbReference type="PROSITE-ProRule" id="PRU10122"/>
    </source>
</evidence>
<evidence type="ECO:0000256" key="5">
    <source>
        <dbReference type="SAM" id="MobiDB-lite"/>
    </source>
</evidence>
<evidence type="ECO:0000269" key="6">
    <source>
    </source>
</evidence>
<evidence type="ECO:0000305" key="7"/>
<comment type="function">
    <text evidence="6">Catalyzes the non-oxidative deamination of L-phenylalanine and L-tyrosine to form trans-cinnamic acid and p-coumaric acid respectively with similar efficiencies. Facilitates the commitment step in phenylpropanoid pathways that produce lignins, coumarins and flavonoids.</text>
</comment>
<comment type="catalytic activity">
    <reaction evidence="6">
        <text>L-phenylalanine = (E)-cinnamate + NH4(+)</text>
        <dbReference type="Rhea" id="RHEA:21384"/>
        <dbReference type="ChEBI" id="CHEBI:15669"/>
        <dbReference type="ChEBI" id="CHEBI:28938"/>
        <dbReference type="ChEBI" id="CHEBI:58095"/>
        <dbReference type="EC" id="4.3.1.25"/>
    </reaction>
</comment>
<comment type="catalytic activity">
    <reaction evidence="6">
        <text>L-tyrosine = (E)-4-coumarate + NH4(+)</text>
        <dbReference type="Rhea" id="RHEA:24906"/>
        <dbReference type="ChEBI" id="CHEBI:12876"/>
        <dbReference type="ChEBI" id="CHEBI:28938"/>
        <dbReference type="ChEBI" id="CHEBI:58315"/>
        <dbReference type="EC" id="4.3.1.25"/>
    </reaction>
</comment>
<comment type="biophysicochemical properties">
    <kinetics>
        <KM evidence="6">658 uM for L-phenylalanine (at pH 7.7)</KM>
        <KM evidence="6">270 uM for L-phenylalanine (at pH 8.7)</KM>
        <KM evidence="6">41 uM for L-tyrosine (at pH 7.7)</KM>
        <KM evidence="6">19 uM for L-tyrosine (at pH 8.7)</KM>
        <text>kcat is 10.6 sec(-1) with L-phenylalanine as substrate and 0.92 sec(-1) with L-tyrosine as substrate (at pH 8.7).</text>
    </kinetics>
    <phDependence>
        <text evidence="6">Optimum pH is 8.0-8.5.</text>
    </phDependence>
    <temperatureDependence>
        <text evidence="6">Optimum temperature is 55-60 degrees Celsius.</text>
    </temperatureDependence>
</comment>
<comment type="pathway">
    <text>Phenylpropanoid metabolism; trans-cinnamate biosynthesis; trans-cinnamate from L-phenylalanine: step 1/1.</text>
</comment>
<comment type="subcellular location">
    <subcellularLocation>
        <location evidence="1">Cytoplasm</location>
    </subcellularLocation>
</comment>
<comment type="similarity">
    <text evidence="7">Belongs to the PAL/histidase family.</text>
</comment>
<sequence length="703" mass="74927">MAGNGAIVESDPLNWGAAAAELAGSHLDEVKRMVAQARQPVVKIEGSTLRVGQVAAVASAKDASGVAVELDEEARPRVKASSEWILDCIAHGGDIYGVTTGFGGTSHRRTKDGPALQVELLRHLNAGIFGTGSDGHTLPSEVTRAAMLVRINTLLQGYSGIRFEILEAITKLLNTGVSPCLPLRGTITASGDLVPLSYIAGLITGRPNAQAVTVDGRKVDAAEAFKIAGIEGGFFKLNPKEGLAIVNGTSVGSALAATVMYDANVLAVLSEVLSAVFCEVMNGKPEYTDHLTHKLKHHPGSIEAAAIMEHILDGSSFMKQAKKVNELDPLLKPKQDRYALRTSPQWLGPQIEVIRAATKSIEREVNSVNDNPVIDVHRGKALHGGNFQGTPIGVSMDNARLAIANIGKLMFAQFSELVNEFYNNGLTSNLAGSRNPSLDYGFKGTEIAMASYCSELQYLGNPITNHVQSADEHNQDVNSLGLVSARKTAEAIDILKLMSSTYIVALCQAVDLRHLEENIKASVKNTVTQVAKKVLTMNPSGELSSARFSEKELISAIDREAVFTYAEDAASASLPLMQKLRAVLVDHALSSGERGAGALRVLQDHQVRGGAPRGAAPGGGGRPRGVAEGTAPVANRIADSRSFPLYRFVREELGCVFLTGERLKSPGEECNKVFVGISQGKLVDPMLECLKEWDGKPLPINIK</sequence>
<reference key="1">
    <citation type="journal article" date="1997" name="Plant Physiol.">
        <title>Maize phenylalanine ammonia-lyase has tyrosine ammonia-lyase activity.</title>
        <authorList>
            <person name="Roesler J."/>
            <person name="Krekel F."/>
            <person name="Amrhein N."/>
            <person name="Schmid J."/>
        </authorList>
    </citation>
    <scope>NUCLEOTIDE SEQUENCE [MRNA]</scope>
    <scope>FUNCTION</scope>
    <scope>CATALYTIC ACTIVITY</scope>
    <scope>BIOPHYSICOCHEMICAL PROPERTIES</scope>
</reference>
<proteinExistence type="evidence at protein level"/>
<accession>Q8VXG7</accession>
<feature type="chain" id="PRO_0000418895" description="Phenylalanine/tyrosine ammonia-lyase">
    <location>
        <begin position="1"/>
        <end position="703"/>
    </location>
</feature>
<feature type="region of interest" description="Disordered" evidence="5">
    <location>
        <begin position="608"/>
        <end position="627"/>
    </location>
</feature>
<feature type="active site" description="Proton donor/acceptor" evidence="3">
    <location>
        <position position="96"/>
    </location>
</feature>
<feature type="binding site" evidence="3">
    <location>
        <position position="247"/>
    </location>
    <ligand>
        <name>(E)-cinnamate</name>
        <dbReference type="ChEBI" id="CHEBI:15669"/>
    </ligand>
</feature>
<feature type="binding site" evidence="3">
    <location>
        <position position="335"/>
    </location>
    <ligand>
        <name>(E)-cinnamate</name>
        <dbReference type="ChEBI" id="CHEBI:15669"/>
    </ligand>
</feature>
<feature type="binding site" evidence="3">
    <location>
        <position position="341"/>
    </location>
    <ligand>
        <name>(E)-cinnamate</name>
        <dbReference type="ChEBI" id="CHEBI:15669"/>
    </ligand>
</feature>
<feature type="binding site" evidence="3">
    <location>
        <position position="371"/>
    </location>
    <ligand>
        <name>(E)-cinnamate</name>
        <dbReference type="ChEBI" id="CHEBI:15669"/>
    </ligand>
</feature>
<feature type="binding site" evidence="2">
    <location>
        <position position="443"/>
    </location>
    <ligand>
        <name>(E)-cinnamate</name>
        <dbReference type="ChEBI" id="CHEBI:15669"/>
    </ligand>
</feature>
<feature type="binding site" evidence="2">
    <location>
        <position position="471"/>
    </location>
    <ligand>
        <name>(E)-cinnamate</name>
        <dbReference type="ChEBI" id="CHEBI:15669"/>
    </ligand>
</feature>
<feature type="binding site" evidence="3">
    <location>
        <position position="474"/>
    </location>
    <ligand>
        <name>(E)-cinnamate</name>
        <dbReference type="ChEBI" id="CHEBI:15669"/>
    </ligand>
</feature>
<feature type="modified residue" description="2,3-didehydroalanine (Ser)" evidence="4">
    <location>
        <position position="190"/>
    </location>
</feature>
<feature type="cross-link" description="5-imidazolinone (Ala-Gly)" evidence="3">
    <location>
        <begin position="189"/>
        <end position="191"/>
    </location>
</feature>
<keyword id="KW-0963">Cytoplasm</keyword>
<keyword id="KW-0456">Lyase</keyword>
<keyword id="KW-0587">Phenylpropanoid metabolism</keyword>
<keyword id="KW-1185">Reference proteome</keyword>
<gene>
    <name type="primary">PAL1</name>
</gene>